<organism>
    <name type="scientific">Dictyostelium discoideum</name>
    <name type="common">Social amoeba</name>
    <dbReference type="NCBI Taxonomy" id="44689"/>
    <lineage>
        <taxon>Eukaryota</taxon>
        <taxon>Amoebozoa</taxon>
        <taxon>Evosea</taxon>
        <taxon>Eumycetozoa</taxon>
        <taxon>Dictyostelia</taxon>
        <taxon>Dictyosteliales</taxon>
        <taxon>Dictyosteliaceae</taxon>
        <taxon>Dictyostelium</taxon>
    </lineage>
</organism>
<reference key="1">
    <citation type="journal article" date="2005" name="Nature">
        <title>The genome of the social amoeba Dictyostelium discoideum.</title>
        <authorList>
            <person name="Eichinger L."/>
            <person name="Pachebat J.A."/>
            <person name="Gloeckner G."/>
            <person name="Rajandream M.A."/>
            <person name="Sucgang R."/>
            <person name="Berriman M."/>
            <person name="Song J."/>
            <person name="Olsen R."/>
            <person name="Szafranski K."/>
            <person name="Xu Q."/>
            <person name="Tunggal B."/>
            <person name="Kummerfeld S."/>
            <person name="Madera M."/>
            <person name="Konfortov B.A."/>
            <person name="Rivero F."/>
            <person name="Bankier A.T."/>
            <person name="Lehmann R."/>
            <person name="Hamlin N."/>
            <person name="Davies R."/>
            <person name="Gaudet P."/>
            <person name="Fey P."/>
            <person name="Pilcher K."/>
            <person name="Chen G."/>
            <person name="Saunders D."/>
            <person name="Sodergren E.J."/>
            <person name="Davis P."/>
            <person name="Kerhornou A."/>
            <person name="Nie X."/>
            <person name="Hall N."/>
            <person name="Anjard C."/>
            <person name="Hemphill L."/>
            <person name="Bason N."/>
            <person name="Farbrother P."/>
            <person name="Desany B."/>
            <person name="Just E."/>
            <person name="Morio T."/>
            <person name="Rost R."/>
            <person name="Churcher C.M."/>
            <person name="Cooper J."/>
            <person name="Haydock S."/>
            <person name="van Driessche N."/>
            <person name="Cronin A."/>
            <person name="Goodhead I."/>
            <person name="Muzny D.M."/>
            <person name="Mourier T."/>
            <person name="Pain A."/>
            <person name="Lu M."/>
            <person name="Harper D."/>
            <person name="Lindsay R."/>
            <person name="Hauser H."/>
            <person name="James K.D."/>
            <person name="Quiles M."/>
            <person name="Madan Babu M."/>
            <person name="Saito T."/>
            <person name="Buchrieser C."/>
            <person name="Wardroper A."/>
            <person name="Felder M."/>
            <person name="Thangavelu M."/>
            <person name="Johnson D."/>
            <person name="Knights A."/>
            <person name="Loulseged H."/>
            <person name="Mungall K.L."/>
            <person name="Oliver K."/>
            <person name="Price C."/>
            <person name="Quail M.A."/>
            <person name="Urushihara H."/>
            <person name="Hernandez J."/>
            <person name="Rabbinowitsch E."/>
            <person name="Steffen D."/>
            <person name="Sanders M."/>
            <person name="Ma J."/>
            <person name="Kohara Y."/>
            <person name="Sharp S."/>
            <person name="Simmonds M.N."/>
            <person name="Spiegler S."/>
            <person name="Tivey A."/>
            <person name="Sugano S."/>
            <person name="White B."/>
            <person name="Walker D."/>
            <person name="Woodward J.R."/>
            <person name="Winckler T."/>
            <person name="Tanaka Y."/>
            <person name="Shaulsky G."/>
            <person name="Schleicher M."/>
            <person name="Weinstock G.M."/>
            <person name="Rosenthal A."/>
            <person name="Cox E.C."/>
            <person name="Chisholm R.L."/>
            <person name="Gibbs R.A."/>
            <person name="Loomis W.F."/>
            <person name="Platzer M."/>
            <person name="Kay R.R."/>
            <person name="Williams J.G."/>
            <person name="Dear P.H."/>
            <person name="Noegel A.A."/>
            <person name="Barrell B.G."/>
            <person name="Kuspa A."/>
        </authorList>
    </citation>
    <scope>NUCLEOTIDE SEQUENCE [LARGE SCALE GENOMIC DNA]</scope>
    <source>
        <strain>AX4</strain>
    </source>
</reference>
<sequence>MEGEQLQTAPYNPRFPQQNQTKHCWANYVDYYGCVKHYNGDNSKCQTFFNSMNSLCPAAWISEWDEQKAADLFPSDRV</sequence>
<comment type="function">
    <text evidence="1">Component of the cytochrome c oxidase, the last enzyme in the mitochondrial electron transport chain which drives oxidative phosphorylation. The respiratory chain contains 3 multisubunit complexes succinate dehydrogenase (complex II, CII), ubiquinol-cytochrome c oxidoreductase (cytochrome b-c1 complex, complex III, CIII) and cytochrome c oxidase (complex IV, CIV), that cooperate to transfer electrons derived from NADH and succinate to molecular oxygen, creating an electrochemical gradient over the inner membrane that drives transmembrane transport and the ATP synthase. Cytochrome c oxidase is the component of the respiratory chain that catalyzes the reduction of oxygen to water. Electrons originating from reduced cytochrome c in the intermembrane space (IMS) are transferred via the dinuclear copper A center (CU(A)) of subunit 2 and heme A of subunit 1 to the active site in subunit 1, a binuclear center (BNC) formed by heme A3 and copper B (CU(B)). The BNC reduces molecular oxygen to 2 water molecules using 4 electrons from cytochrome c in the IMS and 4 protons from the mitochondrial matrix.</text>
</comment>
<comment type="pathway">
    <text evidence="1">Energy metabolism; oxidative phosphorylation.</text>
</comment>
<comment type="subunit">
    <text evidence="1">Component of the cytochrome c oxidase (complex IV, CIV), a multisubunit enzyme composed of a catalytic core of 3 subunits and several supernumerary subunits. The complex exists as a monomer or a dimer and forms supercomplexes (SCs) in the inner mitochondrial membrane with ubiquinol-cytochrome c oxidoreductase (cytochrome b-c1 complex, complex III, CIII).</text>
</comment>
<comment type="subcellular location">
    <subcellularLocation>
        <location evidence="1">Mitochondrion inner membrane</location>
        <topology evidence="1">Peripheral membrane protein</topology>
        <orientation evidence="1">Intermembrane side</orientation>
    </subcellularLocation>
</comment>
<comment type="similarity">
    <text evidence="3">Belongs to the cytochrome c oxidase subunit 6B family.</text>
</comment>
<keyword id="KW-1015">Disulfide bond</keyword>
<keyword id="KW-0472">Membrane</keyword>
<keyword id="KW-0496">Mitochondrion</keyword>
<keyword id="KW-0999">Mitochondrion inner membrane</keyword>
<keyword id="KW-1185">Reference proteome</keyword>
<dbReference type="EMBL" id="AAFI02000070">
    <property type="protein sequence ID" value="EAL65116.1"/>
    <property type="molecule type" value="Genomic_DNA"/>
</dbReference>
<dbReference type="RefSeq" id="XP_638480.1">
    <property type="nucleotide sequence ID" value="XM_633388.1"/>
</dbReference>
<dbReference type="SMR" id="Q54P95"/>
<dbReference type="FunCoup" id="Q54P95">
    <property type="interactions" value="495"/>
</dbReference>
<dbReference type="STRING" id="44689.Q54P95"/>
<dbReference type="PaxDb" id="44689-DDB0186146"/>
<dbReference type="EnsemblProtists" id="EAL65116">
    <property type="protein sequence ID" value="EAL65116"/>
    <property type="gene ID" value="DDB_G0284693"/>
</dbReference>
<dbReference type="GeneID" id="8624731"/>
<dbReference type="KEGG" id="ddi:DDB_G0284693"/>
<dbReference type="dictyBase" id="DDB_G0284693"/>
<dbReference type="VEuPathDB" id="AmoebaDB:DDB_G0284693"/>
<dbReference type="eggNOG" id="KOG3057">
    <property type="taxonomic scope" value="Eukaryota"/>
</dbReference>
<dbReference type="HOGENOM" id="CLU_133964_2_0_1"/>
<dbReference type="InParanoid" id="Q54P95"/>
<dbReference type="OMA" id="NEWIAKW"/>
<dbReference type="PhylomeDB" id="Q54P95"/>
<dbReference type="UniPathway" id="UPA00705"/>
<dbReference type="PRO" id="PR:Q54P95"/>
<dbReference type="Proteomes" id="UP000002195">
    <property type="component" value="Chromosome 4"/>
</dbReference>
<dbReference type="GO" id="GO:0005743">
    <property type="term" value="C:mitochondrial inner membrane"/>
    <property type="evidence" value="ECO:0007669"/>
    <property type="project" value="UniProtKB-SubCell"/>
</dbReference>
<dbReference type="GO" id="GO:0005739">
    <property type="term" value="C:mitochondrion"/>
    <property type="evidence" value="ECO:0000318"/>
    <property type="project" value="GO_Central"/>
</dbReference>
<dbReference type="GO" id="GO:0045277">
    <property type="term" value="C:respiratory chain complex IV"/>
    <property type="evidence" value="ECO:0007669"/>
    <property type="project" value="InterPro"/>
</dbReference>
<dbReference type="GO" id="GO:0006119">
    <property type="term" value="P:oxidative phosphorylation"/>
    <property type="evidence" value="ECO:0007669"/>
    <property type="project" value="UniProtKB-UniPathway"/>
</dbReference>
<dbReference type="CDD" id="cd00926">
    <property type="entry name" value="Cyt_c_Oxidase_VIb"/>
    <property type="match status" value="1"/>
</dbReference>
<dbReference type="FunFam" id="1.10.10.140:FF:000008">
    <property type="entry name" value="Probable cytochrome c oxidase subunit 6B"/>
    <property type="match status" value="1"/>
</dbReference>
<dbReference type="Gene3D" id="1.10.10.140">
    <property type="entry name" value="Cytochrome c oxidase, subunit VIb"/>
    <property type="match status" value="1"/>
</dbReference>
<dbReference type="InterPro" id="IPR048280">
    <property type="entry name" value="COX6B-like"/>
</dbReference>
<dbReference type="InterPro" id="IPR036549">
    <property type="entry name" value="CX6/COA6-like_sf"/>
</dbReference>
<dbReference type="InterPro" id="IPR003213">
    <property type="entry name" value="Cyt_c_oxidase_su6B"/>
</dbReference>
<dbReference type="PANTHER" id="PTHR11387">
    <property type="entry name" value="CYTOCHROME C OXIDASE SUBUNIT 6B"/>
    <property type="match status" value="1"/>
</dbReference>
<dbReference type="Pfam" id="PF02297">
    <property type="entry name" value="COX6B"/>
    <property type="match status" value="1"/>
</dbReference>
<dbReference type="PIRSF" id="PIRSF000278">
    <property type="entry name" value="Cyt_c_oxidase_6B"/>
    <property type="match status" value="1"/>
</dbReference>
<dbReference type="SUPFAM" id="SSF47694">
    <property type="entry name" value="Cytochrome c oxidase subunit h"/>
    <property type="match status" value="1"/>
</dbReference>
<dbReference type="PROSITE" id="PS51808">
    <property type="entry name" value="CHCH"/>
    <property type="match status" value="1"/>
</dbReference>
<name>COX6B_DICDI</name>
<accession>Q54P95</accession>
<gene>
    <name type="ORF">DDB_G0284693</name>
</gene>
<evidence type="ECO:0000250" key="1">
    <source>
        <dbReference type="UniProtKB" id="Q01519"/>
    </source>
</evidence>
<evidence type="ECO:0000255" key="2">
    <source>
        <dbReference type="PROSITE-ProRule" id="PRU01150"/>
    </source>
</evidence>
<evidence type="ECO:0000305" key="3"/>
<protein>
    <recommendedName>
        <fullName>Probable cytochrome c oxidase subunit 6B</fullName>
    </recommendedName>
</protein>
<proteinExistence type="inferred from homology"/>
<feature type="chain" id="PRO_0000369433" description="Probable cytochrome c oxidase subunit 6B">
    <location>
        <begin position="1"/>
        <end position="78"/>
    </location>
</feature>
<feature type="domain" description="CHCH" evidence="2">
    <location>
        <begin position="21"/>
        <end position="64"/>
    </location>
</feature>
<feature type="short sequence motif" description="Cx9C motif" evidence="2">
    <location>
        <begin position="24"/>
        <end position="34"/>
    </location>
</feature>
<feature type="short sequence motif" description="Cx10C motif" evidence="2">
    <location>
        <begin position="45"/>
        <end position="56"/>
    </location>
</feature>
<feature type="disulfide bond" evidence="2">
    <location>
        <begin position="24"/>
        <end position="56"/>
    </location>
</feature>
<feature type="disulfide bond" evidence="2">
    <location>
        <begin position="34"/>
        <end position="45"/>
    </location>
</feature>